<reference key="1">
    <citation type="submission" date="1996-09" db="EMBL/GenBank/DDBJ databases">
        <title>Heat shock protein HSP70 and amino terminus of DnaJ of Streptococcus agalactiae.</title>
        <authorList>
            <person name="Rioux C.R."/>
            <person name="Martin D."/>
            <person name="Hamel J."/>
            <person name="Brodeur B.R."/>
        </authorList>
    </citation>
    <scope>NUCLEOTIDE SEQUENCE [GENOMIC DNA]</scope>
</reference>
<dbReference type="EMBL" id="U72719">
    <property type="protein sequence ID" value="AAB39219.1"/>
    <property type="molecule type" value="Genomic_DNA"/>
</dbReference>
<dbReference type="RefSeq" id="WP_000034648.1">
    <property type="nucleotide sequence ID" value="NZ_WNJK01000010.1"/>
</dbReference>
<dbReference type="SMR" id="P0A3J4"/>
<dbReference type="GeneID" id="66885073"/>
<dbReference type="OMA" id="MGTDWKI"/>
<dbReference type="GO" id="GO:0005524">
    <property type="term" value="F:ATP binding"/>
    <property type="evidence" value="ECO:0007669"/>
    <property type="project" value="UniProtKB-UniRule"/>
</dbReference>
<dbReference type="GO" id="GO:0140662">
    <property type="term" value="F:ATP-dependent protein folding chaperone"/>
    <property type="evidence" value="ECO:0007669"/>
    <property type="project" value="InterPro"/>
</dbReference>
<dbReference type="GO" id="GO:0051082">
    <property type="term" value="F:unfolded protein binding"/>
    <property type="evidence" value="ECO:0007669"/>
    <property type="project" value="InterPro"/>
</dbReference>
<dbReference type="CDD" id="cd10234">
    <property type="entry name" value="ASKHA_NBD_HSP70_DnaK-like"/>
    <property type="match status" value="1"/>
</dbReference>
<dbReference type="FunFam" id="2.60.34.10:FF:000014">
    <property type="entry name" value="Chaperone protein DnaK HSP70"/>
    <property type="match status" value="1"/>
</dbReference>
<dbReference type="FunFam" id="3.30.420.40:FF:000071">
    <property type="entry name" value="Molecular chaperone DnaK"/>
    <property type="match status" value="1"/>
</dbReference>
<dbReference type="FunFam" id="3.90.640.10:FF:000003">
    <property type="entry name" value="Molecular chaperone DnaK"/>
    <property type="match status" value="1"/>
</dbReference>
<dbReference type="Gene3D" id="1.20.1270.10">
    <property type="match status" value="1"/>
</dbReference>
<dbReference type="Gene3D" id="3.30.420.40">
    <property type="match status" value="2"/>
</dbReference>
<dbReference type="Gene3D" id="3.90.640.10">
    <property type="entry name" value="Actin, Chain A, domain 4"/>
    <property type="match status" value="1"/>
</dbReference>
<dbReference type="Gene3D" id="2.60.34.10">
    <property type="entry name" value="Substrate Binding Domain Of DNAk, Chain A, domain 1"/>
    <property type="match status" value="1"/>
</dbReference>
<dbReference type="HAMAP" id="MF_00332">
    <property type="entry name" value="DnaK"/>
    <property type="match status" value="1"/>
</dbReference>
<dbReference type="InterPro" id="IPR043129">
    <property type="entry name" value="ATPase_NBD"/>
</dbReference>
<dbReference type="InterPro" id="IPR012725">
    <property type="entry name" value="Chaperone_DnaK"/>
</dbReference>
<dbReference type="InterPro" id="IPR018181">
    <property type="entry name" value="Heat_shock_70_CS"/>
</dbReference>
<dbReference type="InterPro" id="IPR029048">
    <property type="entry name" value="HSP70_C_sf"/>
</dbReference>
<dbReference type="InterPro" id="IPR029047">
    <property type="entry name" value="HSP70_peptide-bd_sf"/>
</dbReference>
<dbReference type="InterPro" id="IPR013126">
    <property type="entry name" value="Hsp_70_fam"/>
</dbReference>
<dbReference type="NCBIfam" id="NF001413">
    <property type="entry name" value="PRK00290.1"/>
    <property type="match status" value="1"/>
</dbReference>
<dbReference type="NCBIfam" id="TIGR02350">
    <property type="entry name" value="prok_dnaK"/>
    <property type="match status" value="1"/>
</dbReference>
<dbReference type="PANTHER" id="PTHR19375">
    <property type="entry name" value="HEAT SHOCK PROTEIN 70KDA"/>
    <property type="match status" value="1"/>
</dbReference>
<dbReference type="Pfam" id="PF00012">
    <property type="entry name" value="HSP70"/>
    <property type="match status" value="1"/>
</dbReference>
<dbReference type="PRINTS" id="PR00301">
    <property type="entry name" value="HEATSHOCK70"/>
</dbReference>
<dbReference type="SUPFAM" id="SSF53067">
    <property type="entry name" value="Actin-like ATPase domain"/>
    <property type="match status" value="2"/>
</dbReference>
<dbReference type="SUPFAM" id="SSF100934">
    <property type="entry name" value="Heat shock protein 70kD (HSP70), C-terminal subdomain"/>
    <property type="match status" value="1"/>
</dbReference>
<dbReference type="SUPFAM" id="SSF100920">
    <property type="entry name" value="Heat shock protein 70kD (HSP70), peptide-binding domain"/>
    <property type="match status" value="1"/>
</dbReference>
<dbReference type="PROSITE" id="PS00297">
    <property type="entry name" value="HSP70_1"/>
    <property type="match status" value="1"/>
</dbReference>
<dbReference type="PROSITE" id="PS00329">
    <property type="entry name" value="HSP70_2"/>
    <property type="match status" value="1"/>
</dbReference>
<dbReference type="PROSITE" id="PS01036">
    <property type="entry name" value="HSP70_3"/>
    <property type="match status" value="1"/>
</dbReference>
<feature type="chain" id="PRO_0000078545" description="Chaperone protein DnaK">
    <location>
        <begin position="1"/>
        <end position="609"/>
    </location>
</feature>
<feature type="region of interest" description="Disordered" evidence="2">
    <location>
        <begin position="578"/>
        <end position="609"/>
    </location>
</feature>
<feature type="compositionally biased region" description="Low complexity" evidence="2">
    <location>
        <begin position="578"/>
        <end position="595"/>
    </location>
</feature>
<feature type="compositionally biased region" description="Basic and acidic residues" evidence="2">
    <location>
        <begin position="596"/>
        <end position="609"/>
    </location>
</feature>
<feature type="modified residue" description="Phosphothreonine; by autocatalysis" evidence="1">
    <location>
        <position position="173"/>
    </location>
</feature>
<evidence type="ECO:0000250" key="1"/>
<evidence type="ECO:0000256" key="2">
    <source>
        <dbReference type="SAM" id="MobiDB-lite"/>
    </source>
</evidence>
<evidence type="ECO:0000305" key="3"/>
<name>DNAK_STRAG</name>
<organism>
    <name type="scientific">Streptococcus agalactiae</name>
    <dbReference type="NCBI Taxonomy" id="1311"/>
    <lineage>
        <taxon>Bacteria</taxon>
        <taxon>Bacillati</taxon>
        <taxon>Bacillota</taxon>
        <taxon>Bacilli</taxon>
        <taxon>Lactobacillales</taxon>
        <taxon>Streptococcaceae</taxon>
        <taxon>Streptococcus</taxon>
    </lineage>
</organism>
<keyword id="KW-0067">ATP-binding</keyword>
<keyword id="KW-0143">Chaperone</keyword>
<keyword id="KW-0547">Nucleotide-binding</keyword>
<keyword id="KW-0597">Phosphoprotein</keyword>
<keyword id="KW-0346">Stress response</keyword>
<proteinExistence type="inferred from homology"/>
<sequence>MSKIIGIDLGTTNSAVAVLEGTESKIIANPEGNRTTPSVVSFKNGEIIVGDAAKRQAVTNPDTVISIKSKMGTSEKVSANGKEYTPQEISAMILQYLKGYAEDYLGEKVEKAVITVPAYFNDAQRQATKDAGKIAGLEVERIVNEPTAAALAYGMDKTDKDEKILVFDLGGGTFDVSILELGDGVFDVLATAGDNKLGGDDFDQKIIDFLVEEFKKENGIDLSQDKMALQRLKDAAEKAKKDLSGVTQTQISLPFITAGSAGPLHLEMSLSRAKFDDLTRDLVERTKTPVRQALSDAGLSLSEIDEVILVGGSTRIPAVVEAVKAETGKEPNKSVNPDEVVAMGAAIQGGVITGDVKDVVLLDVTPLSLGIETMGGVFTKLIDRNTTIPTSKSQVFSTAADNQPAVDIHVLQGERPMAADNKTLGRFQLTDIPAAPRGIPQIEVTFDIDKNGIVSVKAKDLGTQKEQHIVIQSNSGLTDEEIDKMMKDAEANAEADAKRKEEVDLKNEVDQAIFATEKTIKETEGKGFDTERDAAQSALDELKKAQESGNLDDMKAKLEALNEKAQALAVKLYEQAAAAQQAAQGAEGAQSADSSSKGDDVVDGEFTEK</sequence>
<accession>P0A3J4</accession>
<accession>P95693</accession>
<gene>
    <name type="primary">dnaK</name>
</gene>
<comment type="function">
    <text evidence="1">Acts as a chaperone.</text>
</comment>
<comment type="induction">
    <text evidence="1">By stress conditions e.g. heat shock (By similarity).</text>
</comment>
<comment type="similarity">
    <text evidence="3">Belongs to the heat shock protein 70 family.</text>
</comment>
<protein>
    <recommendedName>
        <fullName>Chaperone protein DnaK</fullName>
    </recommendedName>
    <alternativeName>
        <fullName>HSP70</fullName>
    </alternativeName>
    <alternativeName>
        <fullName>Heat shock 70 kDa protein</fullName>
    </alternativeName>
    <alternativeName>
        <fullName>Heat shock protein 70</fullName>
    </alternativeName>
</protein>